<keyword id="KW-0025">Alternative splicing</keyword>
<keyword id="KW-0963">Cytoplasm</keyword>
<keyword id="KW-0256">Endoplasmic reticulum</keyword>
<keyword id="KW-0507">mRNA processing</keyword>
<keyword id="KW-0539">Nucleus</keyword>
<keyword id="KW-1185">Reference proteome</keyword>
<keyword id="KW-0677">Repeat</keyword>
<keyword id="KW-0694">RNA-binding</keyword>
<evidence type="ECO:0000250" key="1"/>
<evidence type="ECO:0000250" key="2">
    <source>
        <dbReference type="UniProtKB" id="Q9NQ94"/>
    </source>
</evidence>
<evidence type="ECO:0000255" key="3">
    <source>
        <dbReference type="PROSITE-ProRule" id="PRU00176"/>
    </source>
</evidence>
<evidence type="ECO:0000269" key="4">
    <source>
    </source>
</evidence>
<evidence type="ECO:0000269" key="5">
    <source>
    </source>
</evidence>
<evidence type="ECO:0000269" key="6">
    <source>
    </source>
</evidence>
<evidence type="ECO:0000303" key="7">
    <source>
    </source>
</evidence>
<evidence type="ECO:0000303" key="8">
    <source>
    </source>
</evidence>
<evidence type="ECO:0000305" key="9"/>
<evidence type="ECO:0000312" key="10">
    <source>
        <dbReference type="EMBL" id="AAH89622.1"/>
    </source>
</evidence>
<evidence type="ECO:0000312" key="11">
    <source>
        <dbReference type="EMBL" id="AAT74916.1"/>
    </source>
</evidence>
<proteinExistence type="evidence at protein level"/>
<comment type="function">
    <text evidence="2">Essential component of the apolipoprotein B mRNA editing enzyme complex which is responsible for the postranscriptional editing of a CAA codon for Gln to a UAA codon for stop in APOB mRNA. Binds to APOB mRNA and is probably responsible for docking the catalytic subunit, APOBEC1, to the mRNA to allow it to deaminate its target cytosine. The complex also seems to protect the edited APOB mRNA from nonsense-mediated decay (By similarity).</text>
</comment>
<comment type="subunit">
    <text evidence="2 6">Part of the apolipoprotein B mRNA editing complex with APOBEC1. Interacts with TNPO2; TNPO2 may be responsible for transport of A1CF into the nucleus. Interacts with SYNCRIP. Interacts with CELF2/CUGBP2 (By similarity). Interacts with RBM47 (PubMed:24916387).</text>
</comment>
<comment type="subcellular location">
    <subcellularLocation>
        <location evidence="1">Nucleus</location>
    </subcellularLocation>
    <subcellularLocation>
        <location evidence="1">Endoplasmic reticulum</location>
    </subcellularLocation>
    <subcellularLocation>
        <location evidence="1">Cytoplasm</location>
    </subcellularLocation>
    <text evidence="1">Predominantly nuclear where it localizes to heterochromatin. Also cytoplasmic where it is found at the outer surface of the endoplasmic reticulum. Shuttles between the nucleus and cytoplasm. May be transported into the nucleus by the nuclear import protein TNPO2/TRN2 or by APOBEC1 (By similarity).</text>
</comment>
<comment type="alternative products">
    <event type="alternative splicing"/>
    <isoform>
        <id>Q5YD48-1</id>
        <name evidence="4">1</name>
        <sequence type="displayed"/>
    </isoform>
    <isoform>
        <id>Q5YD48-2</id>
        <name evidence="4">2</name>
        <sequence type="described" ref="VSP_051930"/>
    </isoform>
    <isoform>
        <id>Q5YD48-3</id>
        <name evidence="4">3</name>
        <sequence type="described" ref="VSP_051931 VSP_051932"/>
    </isoform>
</comment>
<comment type="tissue specificity">
    <text evidence="4">Expressed primarily in liver, small intestine and kidney.</text>
</comment>
<comment type="domain">
    <text evidence="2">The RRM domains are necessary but not sufficient for binding to APOB mRNA. Additional residues in the pre-RRM and C-terminal regions are required for RNA-binding and for complementing APOBEC1 activity (By similarity).</text>
</comment>
<comment type="disruption phenotype">
    <text evidence="5">Mice display embryonic lethality at E3.5 due to failure of embryos to implant.</text>
</comment>
<comment type="miscellaneous">
    <molecule>Isoform 3</molecule>
    <text evidence="4">Minor isoform detected in less than 10% of cDNA clones.</text>
</comment>
<protein>
    <recommendedName>
        <fullName>APOBEC1 complementation factor</fullName>
    </recommendedName>
    <alternativeName>
        <fullName>APOBEC1-stimulating protein</fullName>
    </alternativeName>
</protein>
<sequence>MESNHKSGDGLSGTQKEAALRALVQRTGYSLVQENGQRKYGGPPPGWDSTPPERGCEIFIGKLPRDLFEDELIPLCEKIGKIYEMRLMMDFNGNNRGYAFVTFSNKQEAKNAIKQLNNYEIRTGRLLGVCASVDNCRLFVGGIPKTKKREEILSEMKKVTEGVVDVIVYPSAADKTKNRGFAFVEYESHRAAAMARRRLLPGRIQLWGHPIAVDWAEPEVEVDEDTMSSVKILYVRNLMLSTSEEMIEKEFNSIKPGAVERVKKIRDYAFVHFSNREDAVEAMKALNGKVLDGSPIEVTLAKPVDKDSYVRYTRGTGGRNTMLQGEYTYPLSHVYDPTTTYLGAPVFYTPQAYAAIPSLHFPATKGHLSNRALIRTPSVREIYMNVPVGAAGVRGLGGRGYLAYTGLGRGYHVKGDKREDKLYDLLPGMELTPMNTVSLKPQGIKLAPQILEEICQKNNWGQPVYQLHSAIGQDQRQLFLYKVTIPALASQNPAIHPFIPPKLSAYVDEAKRYAAEHTLQTLGIPTEGGDAGTTAPTATSATVFPGYAVPSATAPVSTAQLKQAVTLGQDLAAYTTYEVYPTFALTTRGDAYGTF</sequence>
<gene>
    <name type="primary">A1cf</name>
    <name type="synonym">Acf</name>
    <name evidence="2" type="synonym">Asp</name>
</gene>
<dbReference type="EMBL" id="AY566862">
    <property type="protein sequence ID" value="AAT74916.1"/>
    <property type="molecule type" value="mRNA"/>
</dbReference>
<dbReference type="EMBL" id="AY566863">
    <property type="protein sequence ID" value="AAT74917.1"/>
    <property type="molecule type" value="mRNA"/>
</dbReference>
<dbReference type="EMBL" id="AY566864">
    <property type="protein sequence ID" value="AAT74918.1"/>
    <property type="molecule type" value="mRNA"/>
</dbReference>
<dbReference type="EMBL" id="AC117816">
    <property type="status" value="NOT_ANNOTATED_CDS"/>
    <property type="molecule type" value="Genomic_DNA"/>
</dbReference>
<dbReference type="EMBL" id="AC125019">
    <property type="status" value="NOT_ANNOTATED_CDS"/>
    <property type="molecule type" value="Genomic_DNA"/>
</dbReference>
<dbReference type="EMBL" id="BC089622">
    <property type="protein sequence ID" value="AAH89622.1"/>
    <property type="molecule type" value="mRNA"/>
</dbReference>
<dbReference type="CCDS" id="CCDS37959.1">
    <molecule id="Q5YD48-1"/>
</dbReference>
<dbReference type="CCDS" id="CCDS89374.1">
    <molecule id="Q5YD48-2"/>
</dbReference>
<dbReference type="RefSeq" id="NP_001074543.1">
    <molecule id="Q5YD48-1"/>
    <property type="nucleotide sequence ID" value="NM_001081074.2"/>
</dbReference>
<dbReference type="RefSeq" id="NP_001352007.1">
    <molecule id="Q5YD48-2"/>
    <property type="nucleotide sequence ID" value="NM_001365078.1"/>
</dbReference>
<dbReference type="RefSeq" id="XP_006527394.1">
    <property type="nucleotide sequence ID" value="XM_006527331.1"/>
</dbReference>
<dbReference type="SMR" id="Q5YD48"/>
<dbReference type="ComplexPortal" id="CPX-1098">
    <property type="entry name" value="C-to-U editosome complex"/>
</dbReference>
<dbReference type="FunCoup" id="Q5YD48">
    <property type="interactions" value="159"/>
</dbReference>
<dbReference type="STRING" id="10090.ENSMUSP00000075235"/>
<dbReference type="GlyGen" id="Q5YD48">
    <property type="glycosylation" value="1 site, 1 O-linked glycan (1 site)"/>
</dbReference>
<dbReference type="iPTMnet" id="Q5YD48"/>
<dbReference type="PhosphoSitePlus" id="Q5YD48"/>
<dbReference type="SwissPalm" id="Q5YD48"/>
<dbReference type="jPOST" id="Q5YD48"/>
<dbReference type="PaxDb" id="10090-ENSMUSP00000075235"/>
<dbReference type="PeptideAtlas" id="Q5YD48"/>
<dbReference type="ProteomicsDB" id="296460">
    <molecule id="Q5YD48-1"/>
</dbReference>
<dbReference type="ProteomicsDB" id="296461">
    <molecule id="Q5YD48-2"/>
</dbReference>
<dbReference type="ProteomicsDB" id="296462">
    <molecule id="Q5YD48-3"/>
</dbReference>
<dbReference type="Antibodypedia" id="27897">
    <property type="antibodies" value="181 antibodies from 21 providers"/>
</dbReference>
<dbReference type="Ensembl" id="ENSMUST00000075838.8">
    <molecule id="Q5YD48-1"/>
    <property type="protein sequence ID" value="ENSMUSP00000075235.6"/>
    <property type="gene ID" value="ENSMUSG00000052595.9"/>
</dbReference>
<dbReference type="Ensembl" id="ENSMUST00000224304.2">
    <molecule id="Q5YD48-2"/>
    <property type="protein sequence ID" value="ENSMUSP00000153542.2"/>
    <property type="gene ID" value="ENSMUSG00000052595.9"/>
</dbReference>
<dbReference type="Ensembl" id="ENSMUST00000224564.2">
    <molecule id="Q5YD48-3"/>
    <property type="protein sequence ID" value="ENSMUSP00000153465.2"/>
    <property type="gene ID" value="ENSMUSG00000052595.9"/>
</dbReference>
<dbReference type="GeneID" id="69865"/>
<dbReference type="KEGG" id="mmu:69865"/>
<dbReference type="UCSC" id="uc008het.1">
    <molecule id="Q5YD48-3"/>
    <property type="organism name" value="mouse"/>
</dbReference>
<dbReference type="UCSC" id="uc008heu.1">
    <molecule id="Q5YD48-1"/>
    <property type="organism name" value="mouse"/>
</dbReference>
<dbReference type="UCSC" id="uc008hev.1">
    <molecule id="Q5YD48-2"/>
    <property type="organism name" value="mouse"/>
</dbReference>
<dbReference type="AGR" id="MGI:1917115"/>
<dbReference type="CTD" id="29974"/>
<dbReference type="MGI" id="MGI:1917115">
    <property type="gene designation" value="A1cf"/>
</dbReference>
<dbReference type="VEuPathDB" id="HostDB:ENSMUSG00000052595"/>
<dbReference type="eggNOG" id="KOG0117">
    <property type="taxonomic scope" value="Eukaryota"/>
</dbReference>
<dbReference type="GeneTree" id="ENSGT00940000158678"/>
<dbReference type="HOGENOM" id="CLU_022960_5_1_1"/>
<dbReference type="InParanoid" id="Q5YD48"/>
<dbReference type="OMA" id="YATYEVY"/>
<dbReference type="OrthoDB" id="3800936at2759"/>
<dbReference type="PhylomeDB" id="Q5YD48"/>
<dbReference type="TreeFam" id="TF314932"/>
<dbReference type="Reactome" id="R-MMU-72200">
    <property type="pathway name" value="mRNA Editing: C to U Conversion"/>
</dbReference>
<dbReference type="Reactome" id="R-MMU-75094">
    <property type="pathway name" value="Formation of the Editosome"/>
</dbReference>
<dbReference type="BioGRID-ORCS" id="69865">
    <property type="hits" value="1 hit in 78 CRISPR screens"/>
</dbReference>
<dbReference type="PRO" id="PR:Q5YD48"/>
<dbReference type="Proteomes" id="UP000000589">
    <property type="component" value="Chromosome 19"/>
</dbReference>
<dbReference type="RNAct" id="Q5YD48">
    <property type="molecule type" value="protein"/>
</dbReference>
<dbReference type="Bgee" id="ENSMUSG00000052595">
    <property type="expression patterns" value="Expressed in right kidney and 56 other cell types or tissues"/>
</dbReference>
<dbReference type="ExpressionAtlas" id="Q5YD48">
    <property type="expression patterns" value="baseline and differential"/>
</dbReference>
<dbReference type="GO" id="GO:0030895">
    <property type="term" value="C:apolipoprotein B mRNA editing enzyme complex"/>
    <property type="evidence" value="ECO:0000250"/>
    <property type="project" value="UniProtKB"/>
</dbReference>
<dbReference type="GO" id="GO:0005737">
    <property type="term" value="C:cytoplasm"/>
    <property type="evidence" value="ECO:0000314"/>
    <property type="project" value="MGI"/>
</dbReference>
<dbReference type="GO" id="GO:0005783">
    <property type="term" value="C:endoplasmic reticulum"/>
    <property type="evidence" value="ECO:0007669"/>
    <property type="project" value="UniProtKB-SubCell"/>
</dbReference>
<dbReference type="GO" id="GO:0045293">
    <property type="term" value="C:mRNA editing complex"/>
    <property type="evidence" value="ECO:0000303"/>
    <property type="project" value="ComplexPortal"/>
</dbReference>
<dbReference type="GO" id="GO:0005654">
    <property type="term" value="C:nucleoplasm"/>
    <property type="evidence" value="ECO:0007669"/>
    <property type="project" value="Ensembl"/>
</dbReference>
<dbReference type="GO" id="GO:0005634">
    <property type="term" value="C:nucleus"/>
    <property type="evidence" value="ECO:0000314"/>
    <property type="project" value="MGI"/>
</dbReference>
<dbReference type="GO" id="GO:0140767">
    <property type="term" value="F:enzyme-substrate adaptor activity"/>
    <property type="evidence" value="ECO:0007669"/>
    <property type="project" value="Ensembl"/>
</dbReference>
<dbReference type="GO" id="GO:0003723">
    <property type="term" value="F:RNA binding"/>
    <property type="evidence" value="ECO:0000304"/>
    <property type="project" value="HGNC-UCL"/>
</dbReference>
<dbReference type="GO" id="GO:0003727">
    <property type="term" value="F:single-stranded RNA binding"/>
    <property type="evidence" value="ECO:0000250"/>
    <property type="project" value="UniProtKB"/>
</dbReference>
<dbReference type="GO" id="GO:0141166">
    <property type="term" value="P:chromosomal 5-methylcytosine DNA demethylation pathway"/>
    <property type="evidence" value="ECO:0000303"/>
    <property type="project" value="ComplexPortal"/>
</dbReference>
<dbReference type="GO" id="GO:0016554">
    <property type="term" value="P:cytidine to uridine editing"/>
    <property type="evidence" value="ECO:0000314"/>
    <property type="project" value="UniProtKB"/>
</dbReference>
<dbReference type="GO" id="GO:0007566">
    <property type="term" value="P:embryo implantation"/>
    <property type="evidence" value="ECO:0000315"/>
    <property type="project" value="MGI"/>
</dbReference>
<dbReference type="GO" id="GO:0010609">
    <property type="term" value="P:mRNA localization resulting in post-transcriptional regulation of gene expression"/>
    <property type="evidence" value="ECO:0000316"/>
    <property type="project" value="MGI"/>
</dbReference>
<dbReference type="GO" id="GO:0016556">
    <property type="term" value="P:mRNA modification"/>
    <property type="evidence" value="ECO:0000316"/>
    <property type="project" value="MGI"/>
</dbReference>
<dbReference type="GO" id="GO:0006397">
    <property type="term" value="P:mRNA processing"/>
    <property type="evidence" value="ECO:0007669"/>
    <property type="project" value="UniProtKB-KW"/>
</dbReference>
<dbReference type="GO" id="GO:2000623">
    <property type="term" value="P:negative regulation of nuclear-transcribed mRNA catabolic process, nonsense-mediated decay"/>
    <property type="evidence" value="ECO:0000266"/>
    <property type="project" value="ComplexPortal"/>
</dbReference>
<dbReference type="GO" id="GO:0050821">
    <property type="term" value="P:protein stabilization"/>
    <property type="evidence" value="ECO:0000250"/>
    <property type="project" value="UniProtKB"/>
</dbReference>
<dbReference type="CDD" id="cd19900">
    <property type="entry name" value="DSRM_A1CF"/>
    <property type="match status" value="1"/>
</dbReference>
<dbReference type="CDD" id="cd12486">
    <property type="entry name" value="RRM1_ACF"/>
    <property type="match status" value="1"/>
</dbReference>
<dbReference type="CDD" id="cd12490">
    <property type="entry name" value="RRM2_ACF"/>
    <property type="match status" value="1"/>
</dbReference>
<dbReference type="CDD" id="cd12498">
    <property type="entry name" value="RRM3_ACF"/>
    <property type="match status" value="1"/>
</dbReference>
<dbReference type="FunFam" id="3.30.160.20:FF:000025">
    <property type="entry name" value="APOBEC1 complementation factor isoform X1"/>
    <property type="match status" value="1"/>
</dbReference>
<dbReference type="FunFam" id="3.30.70.330:FF:000022">
    <property type="entry name" value="APOBEC1 complementation factor isoform X1"/>
    <property type="match status" value="1"/>
</dbReference>
<dbReference type="FunFam" id="3.30.70.330:FF:000026">
    <property type="entry name" value="APOBEC1 complementation factor isoform X1"/>
    <property type="match status" value="1"/>
</dbReference>
<dbReference type="FunFam" id="3.30.70.330:FF:000179">
    <property type="entry name" value="APOBEC1 complementation factor isoform X1"/>
    <property type="match status" value="1"/>
</dbReference>
<dbReference type="Gene3D" id="3.30.160.20">
    <property type="match status" value="1"/>
</dbReference>
<dbReference type="Gene3D" id="3.30.70.330">
    <property type="match status" value="3"/>
</dbReference>
<dbReference type="InterPro" id="IPR044461">
    <property type="entry name" value="A1CF_DSRM"/>
</dbReference>
<dbReference type="InterPro" id="IPR034538">
    <property type="entry name" value="ACF_RRM1"/>
</dbReference>
<dbReference type="InterPro" id="IPR006535">
    <property type="entry name" value="HnRNP_R/Q_splicing_fac"/>
</dbReference>
<dbReference type="InterPro" id="IPR012677">
    <property type="entry name" value="Nucleotide-bd_a/b_plait_sf"/>
</dbReference>
<dbReference type="InterPro" id="IPR035979">
    <property type="entry name" value="RBD_domain_sf"/>
</dbReference>
<dbReference type="InterPro" id="IPR000504">
    <property type="entry name" value="RRM_dom"/>
</dbReference>
<dbReference type="NCBIfam" id="TIGR01648">
    <property type="entry name" value="hnRNP-R-Q"/>
    <property type="match status" value="1"/>
</dbReference>
<dbReference type="PANTHER" id="PTHR21245">
    <property type="entry name" value="HETEROGENEOUS NUCLEAR RIBONUCLEOPROTEIN"/>
    <property type="match status" value="1"/>
</dbReference>
<dbReference type="Pfam" id="PF14709">
    <property type="entry name" value="DND1_DSRM"/>
    <property type="match status" value="1"/>
</dbReference>
<dbReference type="Pfam" id="PF00076">
    <property type="entry name" value="RRM_1"/>
    <property type="match status" value="3"/>
</dbReference>
<dbReference type="SMART" id="SM00360">
    <property type="entry name" value="RRM"/>
    <property type="match status" value="3"/>
</dbReference>
<dbReference type="SUPFAM" id="SSF54768">
    <property type="entry name" value="dsRNA-binding domain-like"/>
    <property type="match status" value="1"/>
</dbReference>
<dbReference type="SUPFAM" id="SSF54928">
    <property type="entry name" value="RNA-binding domain, RBD"/>
    <property type="match status" value="2"/>
</dbReference>
<dbReference type="PROSITE" id="PS50102">
    <property type="entry name" value="RRM"/>
    <property type="match status" value="3"/>
</dbReference>
<reference evidence="9 11" key="1">
    <citation type="journal article" date="2004" name="Biochim. Biophys. Acta">
        <title>Gene structure and expression of the mouse APOBEC-1 complementation factor: multiple transcriptional initiation sites and a spliced variant with a premature stop translation codon.</title>
        <authorList>
            <person name="Duer S."/>
            <person name="Krause K."/>
            <person name="Pluntke N."/>
            <person name="Greeve J."/>
        </authorList>
    </citation>
    <scope>NUCLEOTIDE SEQUENCE [MRNA] (ISOFORMS 1; 2 AND 3)</scope>
    <scope>TISSUE SPECIFICITY</scope>
    <source>
        <strain evidence="11">BALB/cJ</strain>
    </source>
</reference>
<reference key="2">
    <citation type="journal article" date="2009" name="PLoS Biol.">
        <title>Lineage-specific biology revealed by a finished genome assembly of the mouse.</title>
        <authorList>
            <person name="Church D.M."/>
            <person name="Goodstadt L."/>
            <person name="Hillier L.W."/>
            <person name="Zody M.C."/>
            <person name="Goldstein S."/>
            <person name="She X."/>
            <person name="Bult C.J."/>
            <person name="Agarwala R."/>
            <person name="Cherry J.L."/>
            <person name="DiCuccio M."/>
            <person name="Hlavina W."/>
            <person name="Kapustin Y."/>
            <person name="Meric P."/>
            <person name="Maglott D."/>
            <person name="Birtle Z."/>
            <person name="Marques A.C."/>
            <person name="Graves T."/>
            <person name="Zhou S."/>
            <person name="Teague B."/>
            <person name="Potamousis K."/>
            <person name="Churas C."/>
            <person name="Place M."/>
            <person name="Herschleb J."/>
            <person name="Runnheim R."/>
            <person name="Forrest D."/>
            <person name="Amos-Landgraf J."/>
            <person name="Schwartz D.C."/>
            <person name="Cheng Z."/>
            <person name="Lindblad-Toh K."/>
            <person name="Eichler E.E."/>
            <person name="Ponting C.P."/>
        </authorList>
    </citation>
    <scope>NUCLEOTIDE SEQUENCE [LARGE SCALE GENOMIC DNA]</scope>
    <source>
        <strain>C57BL/6J</strain>
    </source>
</reference>
<reference evidence="9 10" key="3">
    <citation type="journal article" date="2004" name="Genome Res.">
        <title>The status, quality, and expansion of the NIH full-length cDNA project: the Mammalian Gene Collection (MGC).</title>
        <authorList>
            <consortium name="The MGC Project Team"/>
        </authorList>
    </citation>
    <scope>NUCLEOTIDE SEQUENCE [LARGE SCALE MRNA] (ISOFORM 3)</scope>
    <source>
        <tissue evidence="10">Liver</tissue>
    </source>
</reference>
<reference evidence="9" key="4">
    <citation type="journal article" date="2005" name="Mol. Cell. Biol.">
        <title>Targeted deletion of the murine apobec-1 complementation factor (acf) gene results in embryonic lethality.</title>
        <authorList>
            <person name="Blanc V."/>
            <person name="Henderson J.O."/>
            <person name="Newberry E.P."/>
            <person name="Kennedy S."/>
            <person name="Luo J."/>
            <person name="Davidson N.O."/>
        </authorList>
    </citation>
    <scope>DISRUPTION PHENOTYPE</scope>
</reference>
<reference key="5">
    <citation type="journal article" date="2010" name="Cell">
        <title>A tissue-specific atlas of mouse protein phosphorylation and expression.</title>
        <authorList>
            <person name="Huttlin E.L."/>
            <person name="Jedrychowski M.P."/>
            <person name="Elias J.E."/>
            <person name="Goswami T."/>
            <person name="Rad R."/>
            <person name="Beausoleil S.A."/>
            <person name="Villen J."/>
            <person name="Haas W."/>
            <person name="Sowa M.E."/>
            <person name="Gygi S.P."/>
        </authorList>
    </citation>
    <scope>IDENTIFICATION BY MASS SPECTROMETRY [LARGE SCALE ANALYSIS]</scope>
    <source>
        <tissue>Liver</tissue>
    </source>
</reference>
<reference key="6">
    <citation type="journal article" date="2014" name="EMBO Rep.">
        <title>C to U RNA editing mediated by APOBEC1 requires RNA-binding protein RBM47.</title>
        <authorList>
            <person name="Fossat N."/>
            <person name="Tourle K."/>
            <person name="Radziewic T."/>
            <person name="Barratt K."/>
            <person name="Liebhold D."/>
            <person name="Studdert J.B."/>
            <person name="Power M."/>
            <person name="Jones V."/>
            <person name="Loebel D.A."/>
            <person name="Tam P.P."/>
        </authorList>
    </citation>
    <scope>INTERACTION WITH RBM47</scope>
</reference>
<name>A1CF_MOUSE</name>
<accession>Q5YD48</accession>
<accession>E9QJS8</accession>
<accession>Q5FW55</accession>
<accession>Q5YD47</accession>
<feature type="chain" id="PRO_0000081483" description="APOBEC1 complementation factor">
    <location>
        <begin position="1"/>
        <end position="595"/>
    </location>
</feature>
<feature type="domain" description="RRM 1" evidence="3">
    <location>
        <begin position="56"/>
        <end position="134"/>
    </location>
</feature>
<feature type="domain" description="RRM 2" evidence="3">
    <location>
        <begin position="136"/>
        <end position="218"/>
    </location>
</feature>
<feature type="domain" description="RRM 3" evidence="3">
    <location>
        <begin position="231"/>
        <end position="303"/>
    </location>
</feature>
<feature type="region of interest" description="Required for nuclear localization" evidence="2">
    <location>
        <begin position="360"/>
        <end position="409"/>
    </location>
</feature>
<feature type="splice variant" id="VSP_051930" description="In isoform 2." evidence="7">
    <location>
        <begin position="381"/>
        <end position="388"/>
    </location>
</feature>
<feature type="splice variant" id="VSP_051931" description="In isoform 3." evidence="7 8">
    <original>EIYM</original>
    <variation>GNTS</variation>
    <location>
        <begin position="381"/>
        <end position="384"/>
    </location>
</feature>
<feature type="splice variant" id="VSP_051932" description="In isoform 3." evidence="7 8">
    <location>
        <begin position="385"/>
        <end position="595"/>
    </location>
</feature>
<feature type="sequence conflict" description="In Ref. 1; AAT74916/AAT74917/AAT74918." evidence="9" ref="1">
    <original>V</original>
    <variation>R</variation>
    <location>
        <position position="140"/>
    </location>
</feature>
<feature type="sequence conflict" description="In Ref. 1; AAT74916/AAT74917." evidence="9" ref="1">
    <original>I</original>
    <variation>V</variation>
    <location>
        <position position="485"/>
    </location>
</feature>
<organism>
    <name type="scientific">Mus musculus</name>
    <name type="common">Mouse</name>
    <dbReference type="NCBI Taxonomy" id="10090"/>
    <lineage>
        <taxon>Eukaryota</taxon>
        <taxon>Metazoa</taxon>
        <taxon>Chordata</taxon>
        <taxon>Craniata</taxon>
        <taxon>Vertebrata</taxon>
        <taxon>Euteleostomi</taxon>
        <taxon>Mammalia</taxon>
        <taxon>Eutheria</taxon>
        <taxon>Euarchontoglires</taxon>
        <taxon>Glires</taxon>
        <taxon>Rodentia</taxon>
        <taxon>Myomorpha</taxon>
        <taxon>Muroidea</taxon>
        <taxon>Muridae</taxon>
        <taxon>Murinae</taxon>
        <taxon>Mus</taxon>
        <taxon>Mus</taxon>
    </lineage>
</organism>